<evidence type="ECO:0000255" key="1">
    <source>
        <dbReference type="HAMAP-Rule" id="MF_03109"/>
    </source>
</evidence>
<evidence type="ECO:0000255" key="2">
    <source>
        <dbReference type="PROSITE-ProRule" id="PRU01052"/>
    </source>
</evidence>
<evidence type="ECO:0000305" key="3"/>
<comment type="function">
    <text evidence="1">Probable GTP-binding protein that may be involved in cell development.</text>
</comment>
<comment type="subcellular location">
    <subcellularLocation>
        <location evidence="1">Endoplasmic reticulum membrane</location>
        <topology evidence="1">Multi-pass membrane protein</topology>
    </subcellularLocation>
</comment>
<comment type="similarity">
    <text evidence="2">Belongs to the TRAFAC class dynamin-like GTPase superfamily. GB1/RHD3 GTPase family. RHD3 subfamily.</text>
</comment>
<comment type="sequence caution" evidence="3">
    <conflict type="erroneous gene model prediction">
        <sequence resource="EMBL-CDS" id="EAN31829"/>
    </conflict>
</comment>
<proteinExistence type="inferred from homology"/>
<gene>
    <name type="ordered locus">TP04_0477</name>
</gene>
<reference key="1">
    <citation type="journal article" date="2005" name="Science">
        <title>Genome sequence of Theileria parva, a bovine pathogen that transforms lymphocytes.</title>
        <authorList>
            <person name="Gardner M.J."/>
            <person name="Bishop R."/>
            <person name="Shah T."/>
            <person name="de Villiers E.P."/>
            <person name="Carlton J.M."/>
            <person name="Hall N."/>
            <person name="Ren Q."/>
            <person name="Paulsen I.T."/>
            <person name="Pain A."/>
            <person name="Berriman M."/>
            <person name="Wilson R.J.M."/>
            <person name="Sato S."/>
            <person name="Ralph S.A."/>
            <person name="Mann D.J."/>
            <person name="Xiong Z."/>
            <person name="Shallom S.J."/>
            <person name="Weidman J."/>
            <person name="Jiang L."/>
            <person name="Lynn J."/>
            <person name="Weaver B."/>
            <person name="Shoaibi A."/>
            <person name="Domingo A.R."/>
            <person name="Wasawo D."/>
            <person name="Crabtree J."/>
            <person name="Wortman J.R."/>
            <person name="Haas B."/>
            <person name="Angiuoli S.V."/>
            <person name="Creasy T.H."/>
            <person name="Lu C."/>
            <person name="Suh B."/>
            <person name="Silva J.C."/>
            <person name="Utterback T.R."/>
            <person name="Feldblyum T.V."/>
            <person name="Pertea M."/>
            <person name="Allen J."/>
            <person name="Nierman W.C."/>
            <person name="Taracha E.L.N."/>
            <person name="Salzberg S.L."/>
            <person name="White O.R."/>
            <person name="Fitzhugh H.A."/>
            <person name="Morzaria S."/>
            <person name="Venter J.C."/>
            <person name="Fraser C.M."/>
            <person name="Nene V."/>
        </authorList>
    </citation>
    <scope>NUCLEOTIDE SEQUENCE [LARGE SCALE GENOMIC DNA]</scope>
    <source>
        <strain>Muguga</strain>
    </source>
</reference>
<protein>
    <recommendedName>
        <fullName evidence="1">Protein SEY1 homolog</fullName>
        <ecNumber evidence="1">3.6.5.-</ecNumber>
    </recommendedName>
</protein>
<keyword id="KW-0175">Coiled coil</keyword>
<keyword id="KW-0256">Endoplasmic reticulum</keyword>
<keyword id="KW-0342">GTP-binding</keyword>
<keyword id="KW-0378">Hydrolase</keyword>
<keyword id="KW-0472">Membrane</keyword>
<keyword id="KW-0547">Nucleotide-binding</keyword>
<keyword id="KW-1185">Reference proteome</keyword>
<keyword id="KW-0812">Transmembrane</keyword>
<keyword id="KW-1133">Transmembrane helix</keyword>
<name>SEY1_THEPA</name>
<dbReference type="EC" id="3.6.5.-" evidence="1"/>
<dbReference type="EMBL" id="AAGK01000004">
    <property type="protein sequence ID" value="EAN31829.1"/>
    <property type="status" value="ALT_SEQ"/>
    <property type="molecule type" value="Genomic_DNA"/>
</dbReference>
<dbReference type="RefSeq" id="XP_764112.1">
    <property type="nucleotide sequence ID" value="XM_759019.1"/>
</dbReference>
<dbReference type="SMR" id="Q4N280"/>
<dbReference type="FunCoup" id="Q4N280">
    <property type="interactions" value="4"/>
</dbReference>
<dbReference type="STRING" id="5875.Q4N280"/>
<dbReference type="EnsemblProtists" id="EAN31829">
    <property type="protein sequence ID" value="EAN31829"/>
    <property type="gene ID" value="TP04_0477"/>
</dbReference>
<dbReference type="GeneID" id="3500909"/>
<dbReference type="KEGG" id="tpv:TP04_0477"/>
<dbReference type="VEuPathDB" id="PiroplasmaDB:TpMuguga_04g00477"/>
<dbReference type="eggNOG" id="KOG2203">
    <property type="taxonomic scope" value="Eukaryota"/>
</dbReference>
<dbReference type="InParanoid" id="Q4N280"/>
<dbReference type="Proteomes" id="UP000001949">
    <property type="component" value="Unassembled WGS sequence"/>
</dbReference>
<dbReference type="GO" id="GO:0005789">
    <property type="term" value="C:endoplasmic reticulum membrane"/>
    <property type="evidence" value="ECO:0007669"/>
    <property type="project" value="UniProtKB-SubCell"/>
</dbReference>
<dbReference type="GO" id="GO:0005525">
    <property type="term" value="F:GTP binding"/>
    <property type="evidence" value="ECO:0007669"/>
    <property type="project" value="UniProtKB-UniRule"/>
</dbReference>
<dbReference type="GO" id="GO:0003924">
    <property type="term" value="F:GTPase activity"/>
    <property type="evidence" value="ECO:0007669"/>
    <property type="project" value="UniProtKB-UniRule"/>
</dbReference>
<dbReference type="GO" id="GO:0016320">
    <property type="term" value="P:endoplasmic reticulum membrane fusion"/>
    <property type="evidence" value="ECO:0007669"/>
    <property type="project" value="TreeGrafter"/>
</dbReference>
<dbReference type="CDD" id="cd01851">
    <property type="entry name" value="GBP"/>
    <property type="match status" value="1"/>
</dbReference>
<dbReference type="Gene3D" id="3.40.50.300">
    <property type="entry name" value="P-loop containing nucleotide triphosphate hydrolases"/>
    <property type="match status" value="1"/>
</dbReference>
<dbReference type="HAMAP" id="MF_03109">
    <property type="entry name" value="Sey1"/>
    <property type="match status" value="1"/>
</dbReference>
<dbReference type="InterPro" id="IPR030386">
    <property type="entry name" value="G_GB1_RHD3_dom"/>
</dbReference>
<dbReference type="InterPro" id="IPR027417">
    <property type="entry name" value="P-loop_NTPase"/>
</dbReference>
<dbReference type="InterPro" id="IPR008803">
    <property type="entry name" value="RHD3/Sey1"/>
</dbReference>
<dbReference type="InterPro" id="IPR046758">
    <property type="entry name" value="Sey1/RHD3-like_3HB"/>
</dbReference>
<dbReference type="PANTHER" id="PTHR45923">
    <property type="entry name" value="PROTEIN SEY1"/>
    <property type="match status" value="1"/>
</dbReference>
<dbReference type="PANTHER" id="PTHR45923:SF2">
    <property type="entry name" value="PROTEIN SEY1"/>
    <property type="match status" value="1"/>
</dbReference>
<dbReference type="Pfam" id="PF05879">
    <property type="entry name" value="RHD3_GTPase"/>
    <property type="match status" value="1"/>
</dbReference>
<dbReference type="Pfam" id="PF20428">
    <property type="entry name" value="Sey1_3HB"/>
    <property type="match status" value="1"/>
</dbReference>
<dbReference type="SUPFAM" id="SSF52540">
    <property type="entry name" value="P-loop containing nucleoside triphosphate hydrolases"/>
    <property type="match status" value="1"/>
</dbReference>
<dbReference type="PROSITE" id="PS51715">
    <property type="entry name" value="G_GB1_RHD3"/>
    <property type="match status" value="1"/>
</dbReference>
<sequence>MESSNDFSNKDSDTVSLSPVEFSNYQCEINPGFHEFLKKSGFEDVGFRFNVVTILGSQSSGKSHLLNSLFNASFQTMDASRGHSQTTKGIWGSLVLPKDTSVSATVVFDSEGTDSRERGEGRLTFEHRSSLFCLALSDVVIVNLWYNSMGNLTGSNYGLLKTVVEANLELVDTNNEENYKTVLFFCVRDWSPSLSPLNVVKDYVLNNYMRSIWNEISKPARFENMGVESLFEIRVFGLSNAVTQPELFEKDVKEVKKTWESLKPKEYSRRVPSDGFFVYSKNVWKTIIEQNHLDIPTQKEMLSSYRCSEIKTAILESATTSVPELTETDFSEYLMSLLNKVESEYFSQASRYDPKVSEKVGKELLSQLCGKFQPCFESALAGYVKKLAVESSSLLDKEFTVNSSGKELKVANARPYTVWPSFSKKCEELQSKQSEKLSEHLSRFKVSFNKTVSFEYEFDAQPLKDHLNLLVSTEFEVLRSRHLGLLKQQLDSMCNSTFVMVKNNLLDRSLTEDEFWDYFDELFDETHKNCMDQLTTSYQGLVNRASKAEFAQLSLVLLLKAARHNFDELQNNLEQLLLERFDKFFNYQEFKGELVPTEWHKQSAQELNNRYKESKEDALTLLKVLKKTKTKKMPSFDLNDVKKNQYFYSTLGEPVSDKYSTPVTEQFALEVTNSCSKKFLEMYKNAQVVQNAGTSISSWRNIPPIFWLVLLVLGWNELRSVFKVLLRFYVVIPLLIVFYFTFSYSATKLLGPKADQYVKPVRDKVLSLFTALLAWFVRTLHMIASKSSSFKQRPAT</sequence>
<accession>Q4N280</accession>
<feature type="chain" id="PRO_0000384959" description="Protein SEY1 homolog">
    <location>
        <begin position="1"/>
        <end position="796"/>
    </location>
</feature>
<feature type="topological domain" description="Cytoplasmic" evidence="1">
    <location>
        <begin position="1"/>
        <end position="701"/>
    </location>
</feature>
<feature type="transmembrane region" description="Helical" evidence="1">
    <location>
        <begin position="702"/>
        <end position="722"/>
    </location>
</feature>
<feature type="topological domain" description="Lumenal" evidence="1">
    <location>
        <begin position="723"/>
        <end position="725"/>
    </location>
</feature>
<feature type="transmembrane region" description="Helical" evidence="1">
    <location>
        <begin position="726"/>
        <end position="746"/>
    </location>
</feature>
<feature type="topological domain" description="Cytoplasmic" evidence="1">
    <location>
        <begin position="747"/>
        <end position="796"/>
    </location>
</feature>
<feature type="domain" description="GB1/RHD3-type G" evidence="2">
    <location>
        <begin position="46"/>
        <end position="280"/>
    </location>
</feature>
<feature type="coiled-coil region" evidence="1">
    <location>
        <begin position="554"/>
        <end position="626"/>
    </location>
</feature>
<feature type="binding site" evidence="1">
    <location>
        <begin position="56"/>
        <end position="63"/>
    </location>
    <ligand>
        <name>GTP</name>
        <dbReference type="ChEBI" id="CHEBI:37565"/>
    </ligand>
</feature>
<organism>
    <name type="scientific">Theileria parva</name>
    <name type="common">East coast fever infection agent</name>
    <dbReference type="NCBI Taxonomy" id="5875"/>
    <lineage>
        <taxon>Eukaryota</taxon>
        <taxon>Sar</taxon>
        <taxon>Alveolata</taxon>
        <taxon>Apicomplexa</taxon>
        <taxon>Aconoidasida</taxon>
        <taxon>Piroplasmida</taxon>
        <taxon>Theileriidae</taxon>
        <taxon>Theileria</taxon>
    </lineage>
</organism>